<accession>Q35438</accession>
<accession>Q08H46</accession>
<protein>
    <recommendedName>
        <fullName>Cytochrome b</fullName>
    </recommendedName>
    <alternativeName>
        <fullName>Complex III subunit 3</fullName>
    </alternativeName>
    <alternativeName>
        <fullName>Complex III subunit III</fullName>
    </alternativeName>
    <alternativeName>
        <fullName>Cytochrome b-c1 complex subunit 3</fullName>
    </alternativeName>
    <alternativeName>
        <fullName>Ubiquinol-cytochrome-c reductase complex cytochrome b subunit</fullName>
    </alternativeName>
</protein>
<organism>
    <name type="scientific">Phoca fasciata</name>
    <name type="common">Ribbon seal</name>
    <dbReference type="NCBI Taxonomy" id="39088"/>
    <lineage>
        <taxon>Eukaryota</taxon>
        <taxon>Metazoa</taxon>
        <taxon>Chordata</taxon>
        <taxon>Craniata</taxon>
        <taxon>Vertebrata</taxon>
        <taxon>Euteleostomi</taxon>
        <taxon>Mammalia</taxon>
        <taxon>Eutheria</taxon>
        <taxon>Laurasiatheria</taxon>
        <taxon>Carnivora</taxon>
        <taxon>Caniformia</taxon>
        <taxon>Pinnipedia</taxon>
        <taxon>Phocidae</taxon>
        <taxon>Phocinae</taxon>
        <taxon>Phoca</taxon>
    </lineage>
</organism>
<gene>
    <name type="primary">MT-CYB</name>
    <name type="synonym">COB</name>
    <name type="synonym">CYTB</name>
    <name type="synonym">MTCYB</name>
</gene>
<feature type="chain" id="PRO_0000061387" description="Cytochrome b">
    <location>
        <begin position="1"/>
        <end position="379"/>
    </location>
</feature>
<feature type="transmembrane region" description="Helical" evidence="2">
    <location>
        <begin position="33"/>
        <end position="53"/>
    </location>
</feature>
<feature type="transmembrane region" description="Helical" evidence="2">
    <location>
        <begin position="77"/>
        <end position="98"/>
    </location>
</feature>
<feature type="transmembrane region" description="Helical" evidence="2">
    <location>
        <begin position="113"/>
        <end position="133"/>
    </location>
</feature>
<feature type="transmembrane region" description="Helical" evidence="2">
    <location>
        <begin position="178"/>
        <end position="198"/>
    </location>
</feature>
<feature type="transmembrane region" description="Helical" evidence="2">
    <location>
        <begin position="226"/>
        <end position="246"/>
    </location>
</feature>
<feature type="transmembrane region" description="Helical" evidence="2">
    <location>
        <begin position="288"/>
        <end position="308"/>
    </location>
</feature>
<feature type="transmembrane region" description="Helical" evidence="2">
    <location>
        <begin position="320"/>
        <end position="340"/>
    </location>
</feature>
<feature type="transmembrane region" description="Helical" evidence="2">
    <location>
        <begin position="347"/>
        <end position="367"/>
    </location>
</feature>
<feature type="binding site" description="axial binding residue" evidence="2">
    <location>
        <position position="83"/>
    </location>
    <ligand>
        <name>heme b</name>
        <dbReference type="ChEBI" id="CHEBI:60344"/>
        <label>b562</label>
    </ligand>
    <ligandPart>
        <name>Fe</name>
        <dbReference type="ChEBI" id="CHEBI:18248"/>
    </ligandPart>
</feature>
<feature type="binding site" description="axial binding residue" evidence="2">
    <location>
        <position position="97"/>
    </location>
    <ligand>
        <name>heme b</name>
        <dbReference type="ChEBI" id="CHEBI:60344"/>
        <label>b566</label>
    </ligand>
    <ligandPart>
        <name>Fe</name>
        <dbReference type="ChEBI" id="CHEBI:18248"/>
    </ligandPart>
</feature>
<feature type="binding site" description="axial binding residue" evidence="2">
    <location>
        <position position="182"/>
    </location>
    <ligand>
        <name>heme b</name>
        <dbReference type="ChEBI" id="CHEBI:60344"/>
        <label>b562</label>
    </ligand>
    <ligandPart>
        <name>Fe</name>
        <dbReference type="ChEBI" id="CHEBI:18248"/>
    </ligandPart>
</feature>
<feature type="binding site" description="axial binding residue" evidence="2">
    <location>
        <position position="196"/>
    </location>
    <ligand>
        <name>heme b</name>
        <dbReference type="ChEBI" id="CHEBI:60344"/>
        <label>b566</label>
    </ligand>
    <ligandPart>
        <name>Fe</name>
        <dbReference type="ChEBI" id="CHEBI:18248"/>
    </ligandPart>
</feature>
<feature type="binding site" evidence="2">
    <location>
        <position position="201"/>
    </location>
    <ligand>
        <name>a ubiquinone</name>
        <dbReference type="ChEBI" id="CHEBI:16389"/>
    </ligand>
</feature>
<sequence length="379" mass="42545">MTNIRKTHPLMKIINSSFIDLPAPSNISAWWNFGSLLGICLILQILTGLFLAMHYTSDTTTAFSSVTHICRDVNYGWIIRYLHANGASMFFICLYMHVGRGLYYGSYTFTETWNIGIILLFTVMATAFMGYVLPWGQMSFWGATVITNLLSAIPYIGTDLVQWIWGGFSVDKATLTRFFAFHFILPFVVSALAAVHLLFLHETGSNNPSGIVSDSDKIPFHPYYTIKDILGALLLILVLMLLVLFSPDLLGDPDNYTPANPLSTPPHIKPEWYFLFAYAILRSIPNKLGGVLALVLSILILAIVPLLHTSKQRGMMFRPISQCLFWLLVADLLTLTWIGGQPVEHPYITIGQLASILYFMILLVLMPIASIIENNILKW</sequence>
<geneLocation type="mitochondrion"/>
<reference key="1">
    <citation type="journal article" date="1995" name="J. Mol. Evol.">
        <title>A molecular view of pinniped relationships with particular emphasis on the true seals.</title>
        <authorList>
            <person name="Arnason U."/>
            <person name="Bodin K."/>
            <person name="Gullberg A."/>
            <person name="Ledje C."/>
            <person name="Mouchaty S."/>
        </authorList>
    </citation>
    <scope>NUCLEOTIDE SEQUENCE [GENOMIC DNA]</scope>
</reference>
<reference key="2">
    <citation type="journal article" date="2006" name="Mol. Phylogenet. Evol.">
        <title>Pinniped phylogeny and a new hypothesis for their origin and dispersal.</title>
        <authorList>
            <person name="Arnason U."/>
            <person name="Gullberg A."/>
            <person name="Janke A."/>
            <person name="Kullberg M."/>
            <person name="Lehman N."/>
            <person name="Petrov E.A."/>
            <person name="Vainola R."/>
        </authorList>
    </citation>
    <scope>NUCLEOTIDE SEQUENCE [GENOMIC DNA]</scope>
</reference>
<proteinExistence type="inferred from homology"/>
<name>CYB_PHOFA</name>
<comment type="function">
    <text evidence="2">Component of the ubiquinol-cytochrome c reductase complex (complex III or cytochrome b-c1 complex) that is part of the mitochondrial respiratory chain. The b-c1 complex mediates electron transfer from ubiquinol to cytochrome c. Contributes to the generation of a proton gradient across the mitochondrial membrane that is then used for ATP synthesis.</text>
</comment>
<comment type="cofactor">
    <cofactor evidence="2">
        <name>heme b</name>
        <dbReference type="ChEBI" id="CHEBI:60344"/>
    </cofactor>
    <text evidence="2">Binds 2 heme b groups non-covalently.</text>
</comment>
<comment type="subunit">
    <text evidence="2">The cytochrome bc1 complex contains 11 subunits: 3 respiratory subunits (MT-CYB, CYC1 and UQCRFS1), 2 core proteins (UQCRC1 and UQCRC2) and 6 low-molecular weight proteins (UQCRH/QCR6, UQCRB/QCR7, UQCRQ/QCR8, UQCR10/QCR9, UQCR11/QCR10 and a cleavage product of UQCRFS1). This cytochrome bc1 complex then forms a dimer.</text>
</comment>
<comment type="subcellular location">
    <subcellularLocation>
        <location evidence="2">Mitochondrion inner membrane</location>
        <topology evidence="2">Multi-pass membrane protein</topology>
    </subcellularLocation>
</comment>
<comment type="miscellaneous">
    <text evidence="1">Heme 1 (or BL or b562) is low-potential and absorbs at about 562 nm, and heme 2 (or BH or b566) is high-potential and absorbs at about 566 nm.</text>
</comment>
<comment type="similarity">
    <text evidence="3 4">Belongs to the cytochrome b family.</text>
</comment>
<comment type="caution">
    <text evidence="2">The full-length protein contains only eight transmembrane helices, not nine as predicted by bioinformatics tools.</text>
</comment>
<dbReference type="EMBL" id="X82302">
    <property type="protein sequence ID" value="CAA57745.1"/>
    <property type="molecule type" value="Genomic_DNA"/>
</dbReference>
<dbReference type="EMBL" id="AM181029">
    <property type="protein sequence ID" value="CAJ57052.1"/>
    <property type="molecule type" value="Genomic_DNA"/>
</dbReference>
<dbReference type="PIR" id="S58447">
    <property type="entry name" value="S58447"/>
</dbReference>
<dbReference type="RefSeq" id="YP_778863.1">
    <property type="nucleotide sequence ID" value="NC_008428.1"/>
</dbReference>
<dbReference type="SMR" id="Q35438"/>
<dbReference type="GeneID" id="4356208"/>
<dbReference type="CTD" id="4519"/>
<dbReference type="GO" id="GO:0005743">
    <property type="term" value="C:mitochondrial inner membrane"/>
    <property type="evidence" value="ECO:0007669"/>
    <property type="project" value="UniProtKB-SubCell"/>
</dbReference>
<dbReference type="GO" id="GO:0045275">
    <property type="term" value="C:respiratory chain complex III"/>
    <property type="evidence" value="ECO:0007669"/>
    <property type="project" value="InterPro"/>
</dbReference>
<dbReference type="GO" id="GO:0046872">
    <property type="term" value="F:metal ion binding"/>
    <property type="evidence" value="ECO:0007669"/>
    <property type="project" value="UniProtKB-KW"/>
</dbReference>
<dbReference type="GO" id="GO:0008121">
    <property type="term" value="F:ubiquinol-cytochrome-c reductase activity"/>
    <property type="evidence" value="ECO:0007669"/>
    <property type="project" value="InterPro"/>
</dbReference>
<dbReference type="GO" id="GO:0006122">
    <property type="term" value="P:mitochondrial electron transport, ubiquinol to cytochrome c"/>
    <property type="evidence" value="ECO:0007669"/>
    <property type="project" value="TreeGrafter"/>
</dbReference>
<dbReference type="CDD" id="cd00290">
    <property type="entry name" value="cytochrome_b_C"/>
    <property type="match status" value="1"/>
</dbReference>
<dbReference type="CDD" id="cd00284">
    <property type="entry name" value="Cytochrome_b_N"/>
    <property type="match status" value="1"/>
</dbReference>
<dbReference type="FunFam" id="1.20.810.10:FF:000002">
    <property type="entry name" value="Cytochrome b"/>
    <property type="match status" value="1"/>
</dbReference>
<dbReference type="Gene3D" id="1.20.810.10">
    <property type="entry name" value="Cytochrome Bc1 Complex, Chain C"/>
    <property type="match status" value="1"/>
</dbReference>
<dbReference type="InterPro" id="IPR005798">
    <property type="entry name" value="Cyt_b/b6_C"/>
</dbReference>
<dbReference type="InterPro" id="IPR036150">
    <property type="entry name" value="Cyt_b/b6_C_sf"/>
</dbReference>
<dbReference type="InterPro" id="IPR005797">
    <property type="entry name" value="Cyt_b/b6_N"/>
</dbReference>
<dbReference type="InterPro" id="IPR027387">
    <property type="entry name" value="Cytb/b6-like_sf"/>
</dbReference>
<dbReference type="InterPro" id="IPR030689">
    <property type="entry name" value="Cytochrome_b"/>
</dbReference>
<dbReference type="InterPro" id="IPR048260">
    <property type="entry name" value="Cytochrome_b_C_euk/bac"/>
</dbReference>
<dbReference type="InterPro" id="IPR048259">
    <property type="entry name" value="Cytochrome_b_N_euk/bac"/>
</dbReference>
<dbReference type="InterPro" id="IPR016174">
    <property type="entry name" value="Di-haem_cyt_TM"/>
</dbReference>
<dbReference type="PANTHER" id="PTHR19271">
    <property type="entry name" value="CYTOCHROME B"/>
    <property type="match status" value="1"/>
</dbReference>
<dbReference type="PANTHER" id="PTHR19271:SF16">
    <property type="entry name" value="CYTOCHROME B"/>
    <property type="match status" value="1"/>
</dbReference>
<dbReference type="Pfam" id="PF00032">
    <property type="entry name" value="Cytochrom_B_C"/>
    <property type="match status" value="1"/>
</dbReference>
<dbReference type="Pfam" id="PF00033">
    <property type="entry name" value="Cytochrome_B"/>
    <property type="match status" value="1"/>
</dbReference>
<dbReference type="PIRSF" id="PIRSF038885">
    <property type="entry name" value="COB"/>
    <property type="match status" value="1"/>
</dbReference>
<dbReference type="SUPFAM" id="SSF81648">
    <property type="entry name" value="a domain/subunit of cytochrome bc1 complex (Ubiquinol-cytochrome c reductase)"/>
    <property type="match status" value="1"/>
</dbReference>
<dbReference type="SUPFAM" id="SSF81342">
    <property type="entry name" value="Transmembrane di-heme cytochromes"/>
    <property type="match status" value="1"/>
</dbReference>
<dbReference type="PROSITE" id="PS51003">
    <property type="entry name" value="CYTB_CTER"/>
    <property type="match status" value="1"/>
</dbReference>
<dbReference type="PROSITE" id="PS51002">
    <property type="entry name" value="CYTB_NTER"/>
    <property type="match status" value="1"/>
</dbReference>
<evidence type="ECO:0000250" key="1"/>
<evidence type="ECO:0000250" key="2">
    <source>
        <dbReference type="UniProtKB" id="P00157"/>
    </source>
</evidence>
<evidence type="ECO:0000255" key="3">
    <source>
        <dbReference type="PROSITE-ProRule" id="PRU00967"/>
    </source>
</evidence>
<evidence type="ECO:0000255" key="4">
    <source>
        <dbReference type="PROSITE-ProRule" id="PRU00968"/>
    </source>
</evidence>
<keyword id="KW-0249">Electron transport</keyword>
<keyword id="KW-0349">Heme</keyword>
<keyword id="KW-0408">Iron</keyword>
<keyword id="KW-0472">Membrane</keyword>
<keyword id="KW-0479">Metal-binding</keyword>
<keyword id="KW-0496">Mitochondrion</keyword>
<keyword id="KW-0999">Mitochondrion inner membrane</keyword>
<keyword id="KW-0679">Respiratory chain</keyword>
<keyword id="KW-0812">Transmembrane</keyword>
<keyword id="KW-1133">Transmembrane helix</keyword>
<keyword id="KW-0813">Transport</keyword>
<keyword id="KW-0830">Ubiquinone</keyword>